<proteinExistence type="predicted"/>
<accession>P44189</accession>
<gene>
    <name type="ordered locus">HI_1418</name>
</gene>
<keyword id="KW-1185">Reference proteome</keyword>
<organism>
    <name type="scientific">Haemophilus influenzae (strain ATCC 51907 / DSM 11121 / KW20 / Rd)</name>
    <dbReference type="NCBI Taxonomy" id="71421"/>
    <lineage>
        <taxon>Bacteria</taxon>
        <taxon>Pseudomonadati</taxon>
        <taxon>Pseudomonadota</taxon>
        <taxon>Gammaproteobacteria</taxon>
        <taxon>Pasteurellales</taxon>
        <taxon>Pasteurellaceae</taxon>
        <taxon>Haemophilus</taxon>
    </lineage>
</organism>
<feature type="chain" id="PRO_0000078053" description="Uncharacterized protein HI_1418">
    <location>
        <begin position="1"/>
        <end position="201"/>
    </location>
</feature>
<feature type="domain" description="Bro-N" evidence="1">
    <location>
        <begin position="15"/>
        <end position="122"/>
    </location>
</feature>
<sequence length="201" mass="23567">MGKLSILSKRKYTMKNQIQFSTFNFKDLPVRVILDPKGEFWFCGTDVCHILGYTNSRKALQDHCKQGGVTKRYTPTKSADQEMTFINEPNLYRLIIKSRKPEAEPFEAWVFEEVLPQIRKTGKYQLQPQQLALPEPEKKFSFEFTEYELQQLVWLWFAFMRGIVTFQHIEKAFKALGSNMSGDIYGQAYEYLSVYAQQTKS</sequence>
<dbReference type="EMBL" id="L42023">
    <property type="protein sequence ID" value="AAC23068.1"/>
    <property type="molecule type" value="Genomic_DNA"/>
</dbReference>
<dbReference type="PIR" id="A64029">
    <property type="entry name" value="A64029"/>
</dbReference>
<dbReference type="RefSeq" id="NP_439568.2">
    <property type="nucleotide sequence ID" value="NC_000907.1"/>
</dbReference>
<dbReference type="EnsemblBacteria" id="AAC23068">
    <property type="protein sequence ID" value="AAC23068"/>
    <property type="gene ID" value="HI_1418"/>
</dbReference>
<dbReference type="KEGG" id="hin:HI_1418"/>
<dbReference type="PATRIC" id="fig|71421.8.peg.1476"/>
<dbReference type="eggNOG" id="COG3617">
    <property type="taxonomic scope" value="Bacteria"/>
</dbReference>
<dbReference type="HOGENOM" id="CLU_046670_6_0_6"/>
<dbReference type="OrthoDB" id="1042522at2"/>
<dbReference type="PhylomeDB" id="P44189"/>
<dbReference type="Proteomes" id="UP000000579">
    <property type="component" value="Chromosome"/>
</dbReference>
<dbReference type="InterPro" id="IPR003497">
    <property type="entry name" value="BRO_N_domain"/>
</dbReference>
<dbReference type="InterPro" id="IPR018876">
    <property type="entry name" value="Phage_P22_antirepressor_C"/>
</dbReference>
<dbReference type="PANTHER" id="PTHR36180:SF2">
    <property type="entry name" value="BRO FAMILY PROTEIN"/>
    <property type="match status" value="1"/>
</dbReference>
<dbReference type="PANTHER" id="PTHR36180">
    <property type="entry name" value="DNA-BINDING PROTEIN-RELATED-RELATED"/>
    <property type="match status" value="1"/>
</dbReference>
<dbReference type="Pfam" id="PF02498">
    <property type="entry name" value="Bro-N"/>
    <property type="match status" value="1"/>
</dbReference>
<dbReference type="Pfam" id="PF10548">
    <property type="entry name" value="P22_AR_C"/>
    <property type="match status" value="1"/>
</dbReference>
<dbReference type="SMART" id="SM01040">
    <property type="entry name" value="Bro-N"/>
    <property type="match status" value="1"/>
</dbReference>
<dbReference type="PROSITE" id="PS51750">
    <property type="entry name" value="BRO_N"/>
    <property type="match status" value="1"/>
</dbReference>
<reference key="1">
    <citation type="journal article" date="1995" name="Science">
        <title>Whole-genome random sequencing and assembly of Haemophilus influenzae Rd.</title>
        <authorList>
            <person name="Fleischmann R.D."/>
            <person name="Adams M.D."/>
            <person name="White O."/>
            <person name="Clayton R.A."/>
            <person name="Kirkness E.F."/>
            <person name="Kerlavage A.R."/>
            <person name="Bult C.J."/>
            <person name="Tomb J.-F."/>
            <person name="Dougherty B.A."/>
            <person name="Merrick J.M."/>
            <person name="McKenney K."/>
            <person name="Sutton G.G."/>
            <person name="FitzHugh W."/>
            <person name="Fields C.A."/>
            <person name="Gocayne J.D."/>
            <person name="Scott J.D."/>
            <person name="Shirley R."/>
            <person name="Liu L.-I."/>
            <person name="Glodek A."/>
            <person name="Kelley J.M."/>
            <person name="Weidman J.F."/>
            <person name="Phillips C.A."/>
            <person name="Spriggs T."/>
            <person name="Hedblom E."/>
            <person name="Cotton M.D."/>
            <person name="Utterback T.R."/>
            <person name="Hanna M.C."/>
            <person name="Nguyen D.T."/>
            <person name="Saudek D.M."/>
            <person name="Brandon R.C."/>
            <person name="Fine L.D."/>
            <person name="Fritchman J.L."/>
            <person name="Fuhrmann J.L."/>
            <person name="Geoghagen N.S.M."/>
            <person name="Gnehm C.L."/>
            <person name="McDonald L.A."/>
            <person name="Small K.V."/>
            <person name="Fraser C.M."/>
            <person name="Smith H.O."/>
            <person name="Venter J.C."/>
        </authorList>
    </citation>
    <scope>NUCLEOTIDE SEQUENCE [LARGE SCALE GENOMIC DNA]</scope>
    <source>
        <strain>ATCC 51907 / DSM 11121 / KW20 / Rd</strain>
    </source>
</reference>
<evidence type="ECO:0000255" key="1">
    <source>
        <dbReference type="PROSITE-ProRule" id="PRU01086"/>
    </source>
</evidence>
<protein>
    <recommendedName>
        <fullName>Uncharacterized protein HI_1418</fullName>
    </recommendedName>
</protein>
<name>Y1418_HAEIN</name>